<dbReference type="EMBL" id="CP000086">
    <property type="protein sequence ID" value="ABC38002.1"/>
    <property type="molecule type" value="Genomic_DNA"/>
</dbReference>
<dbReference type="RefSeq" id="WP_006026082.1">
    <property type="nucleotide sequence ID" value="NZ_CP008785.1"/>
</dbReference>
<dbReference type="SMR" id="Q2SWX6"/>
<dbReference type="GeneID" id="45121777"/>
<dbReference type="KEGG" id="bte:BTH_I2049"/>
<dbReference type="HOGENOM" id="CLU_108953_3_0_4"/>
<dbReference type="Proteomes" id="UP000001930">
    <property type="component" value="Chromosome I"/>
</dbReference>
<dbReference type="GO" id="GO:0005829">
    <property type="term" value="C:cytosol"/>
    <property type="evidence" value="ECO:0007669"/>
    <property type="project" value="TreeGrafter"/>
</dbReference>
<dbReference type="GO" id="GO:0003723">
    <property type="term" value="F:RNA binding"/>
    <property type="evidence" value="ECO:0007669"/>
    <property type="project" value="UniProtKB-UniRule"/>
</dbReference>
<dbReference type="GO" id="GO:0070929">
    <property type="term" value="P:trans-translation"/>
    <property type="evidence" value="ECO:0007669"/>
    <property type="project" value="UniProtKB-UniRule"/>
</dbReference>
<dbReference type="CDD" id="cd09294">
    <property type="entry name" value="SmpB"/>
    <property type="match status" value="1"/>
</dbReference>
<dbReference type="Gene3D" id="2.40.280.10">
    <property type="match status" value="1"/>
</dbReference>
<dbReference type="HAMAP" id="MF_00023">
    <property type="entry name" value="SmpB"/>
    <property type="match status" value="1"/>
</dbReference>
<dbReference type="InterPro" id="IPR023620">
    <property type="entry name" value="SmpB"/>
</dbReference>
<dbReference type="InterPro" id="IPR000037">
    <property type="entry name" value="SsrA-bd_prot"/>
</dbReference>
<dbReference type="InterPro" id="IPR020081">
    <property type="entry name" value="SsrA-bd_prot_CS"/>
</dbReference>
<dbReference type="NCBIfam" id="NF003843">
    <property type="entry name" value="PRK05422.1"/>
    <property type="match status" value="1"/>
</dbReference>
<dbReference type="NCBIfam" id="TIGR00086">
    <property type="entry name" value="smpB"/>
    <property type="match status" value="1"/>
</dbReference>
<dbReference type="PANTHER" id="PTHR30308:SF2">
    <property type="entry name" value="SSRA-BINDING PROTEIN"/>
    <property type="match status" value="1"/>
</dbReference>
<dbReference type="PANTHER" id="PTHR30308">
    <property type="entry name" value="TMRNA-BINDING COMPONENT OF TRANS-TRANSLATION TAGGING COMPLEX"/>
    <property type="match status" value="1"/>
</dbReference>
<dbReference type="Pfam" id="PF01668">
    <property type="entry name" value="SmpB"/>
    <property type="match status" value="1"/>
</dbReference>
<dbReference type="SUPFAM" id="SSF74982">
    <property type="entry name" value="Small protein B (SmpB)"/>
    <property type="match status" value="1"/>
</dbReference>
<dbReference type="PROSITE" id="PS01317">
    <property type="entry name" value="SSRP"/>
    <property type="match status" value="1"/>
</dbReference>
<sequence>MSIIDNRKAFFDYHIEERYEAGLVLEGWEVKALRAGRGQIKEGYVVVKNAEIFLIGTHISPLPEASTHIKPDPVRTRKLLLHRDEIKKLIGKVEQRGYTLVPLNFHYKGGRVKCEIGLAKGKKLHDKRETEKKRDWEREKARIMRSAT</sequence>
<comment type="function">
    <text evidence="1">Required for rescue of stalled ribosomes mediated by trans-translation. Binds to transfer-messenger RNA (tmRNA), required for stable association of tmRNA with ribosomes. tmRNA and SmpB together mimic tRNA shape, replacing the anticodon stem-loop with SmpB. tmRNA is encoded by the ssrA gene; the 2 termini fold to resemble tRNA(Ala) and it encodes a 'tag peptide', a short internal open reading frame. During trans-translation Ala-aminoacylated tmRNA acts like a tRNA, entering the A-site of stalled ribosomes, displacing the stalled mRNA. The ribosome then switches to translate the ORF on the tmRNA; the nascent peptide is terminated with the 'tag peptide' encoded by the tmRNA and targeted for degradation. The ribosome is freed to recommence translation, which seems to be the essential function of trans-translation.</text>
</comment>
<comment type="subcellular location">
    <subcellularLocation>
        <location evidence="1">Cytoplasm</location>
    </subcellularLocation>
    <text evidence="1">The tmRNA-SmpB complex associates with stalled 70S ribosomes.</text>
</comment>
<comment type="similarity">
    <text evidence="1">Belongs to the SmpB family.</text>
</comment>
<accession>Q2SWX6</accession>
<gene>
    <name evidence="1" type="primary">smpB</name>
    <name type="ordered locus">BTH_I2049</name>
</gene>
<reference key="1">
    <citation type="journal article" date="2005" name="BMC Genomics">
        <title>Bacterial genome adaptation to niches: divergence of the potential virulence genes in three Burkholderia species of different survival strategies.</title>
        <authorList>
            <person name="Kim H.S."/>
            <person name="Schell M.A."/>
            <person name="Yu Y."/>
            <person name="Ulrich R.L."/>
            <person name="Sarria S.H."/>
            <person name="Nierman W.C."/>
            <person name="DeShazer D."/>
        </authorList>
    </citation>
    <scope>NUCLEOTIDE SEQUENCE [LARGE SCALE GENOMIC DNA]</scope>
    <source>
        <strain>ATCC 700388 / DSM 13276 / CCUG 48851 / CIP 106301 / E264</strain>
    </source>
</reference>
<organism>
    <name type="scientific">Burkholderia thailandensis (strain ATCC 700388 / DSM 13276 / CCUG 48851 / CIP 106301 / E264)</name>
    <dbReference type="NCBI Taxonomy" id="271848"/>
    <lineage>
        <taxon>Bacteria</taxon>
        <taxon>Pseudomonadati</taxon>
        <taxon>Pseudomonadota</taxon>
        <taxon>Betaproteobacteria</taxon>
        <taxon>Burkholderiales</taxon>
        <taxon>Burkholderiaceae</taxon>
        <taxon>Burkholderia</taxon>
        <taxon>pseudomallei group</taxon>
    </lineage>
</organism>
<protein>
    <recommendedName>
        <fullName evidence="1">SsrA-binding protein</fullName>
    </recommendedName>
    <alternativeName>
        <fullName evidence="1">Small protein B</fullName>
    </alternativeName>
</protein>
<feature type="chain" id="PRO_1000002020" description="SsrA-binding protein">
    <location>
        <begin position="1"/>
        <end position="148"/>
    </location>
</feature>
<feature type="region of interest" description="Disordered" evidence="2">
    <location>
        <begin position="123"/>
        <end position="148"/>
    </location>
</feature>
<feature type="compositionally biased region" description="Basic and acidic residues" evidence="2">
    <location>
        <begin position="126"/>
        <end position="142"/>
    </location>
</feature>
<name>SSRP_BURTA</name>
<evidence type="ECO:0000255" key="1">
    <source>
        <dbReference type="HAMAP-Rule" id="MF_00023"/>
    </source>
</evidence>
<evidence type="ECO:0000256" key="2">
    <source>
        <dbReference type="SAM" id="MobiDB-lite"/>
    </source>
</evidence>
<keyword id="KW-0963">Cytoplasm</keyword>
<keyword id="KW-0694">RNA-binding</keyword>
<proteinExistence type="inferred from homology"/>